<organism>
    <name type="scientific">Blochmanniella pennsylvanica (strain BPEN)</name>
    <dbReference type="NCBI Taxonomy" id="291272"/>
    <lineage>
        <taxon>Bacteria</taxon>
        <taxon>Pseudomonadati</taxon>
        <taxon>Pseudomonadota</taxon>
        <taxon>Gammaproteobacteria</taxon>
        <taxon>Enterobacterales</taxon>
        <taxon>Enterobacteriaceae</taxon>
        <taxon>ant endosymbionts</taxon>
        <taxon>Candidatus Blochmanniella</taxon>
    </lineage>
</organism>
<keyword id="KW-0414">Isoprene biosynthesis</keyword>
<keyword id="KW-0548">Nucleotidyltransferase</keyword>
<keyword id="KW-1185">Reference proteome</keyword>
<keyword id="KW-0808">Transferase</keyword>
<name>ISPD_BLOPB</name>
<protein>
    <recommendedName>
        <fullName evidence="1">2-C-methyl-D-erythritol 4-phosphate cytidylyltransferase</fullName>
        <ecNumber evidence="1">2.7.7.60</ecNumber>
    </recommendedName>
    <alternativeName>
        <fullName evidence="1">4-diphosphocytidyl-2C-methyl-D-erythritol synthase</fullName>
    </alternativeName>
    <alternativeName>
        <fullName evidence="1">MEP cytidylyltransferase</fullName>
        <shortName evidence="1">MCT</shortName>
    </alternativeName>
</protein>
<gene>
    <name evidence="1" type="primary">ispD</name>
    <name type="ordered locus">BPEN_171</name>
</gene>
<comment type="function">
    <text evidence="1">Catalyzes the formation of 4-diphosphocytidyl-2-C-methyl-D-erythritol from CTP and 2-C-methyl-D-erythritol 4-phosphate (MEP).</text>
</comment>
<comment type="catalytic activity">
    <reaction evidence="1">
        <text>2-C-methyl-D-erythritol 4-phosphate + CTP + H(+) = 4-CDP-2-C-methyl-D-erythritol + diphosphate</text>
        <dbReference type="Rhea" id="RHEA:13429"/>
        <dbReference type="ChEBI" id="CHEBI:15378"/>
        <dbReference type="ChEBI" id="CHEBI:33019"/>
        <dbReference type="ChEBI" id="CHEBI:37563"/>
        <dbReference type="ChEBI" id="CHEBI:57823"/>
        <dbReference type="ChEBI" id="CHEBI:58262"/>
        <dbReference type="EC" id="2.7.7.60"/>
    </reaction>
</comment>
<comment type="pathway">
    <text evidence="1">Isoprenoid biosynthesis; isopentenyl diphosphate biosynthesis via DXP pathway; isopentenyl diphosphate from 1-deoxy-D-xylulose 5-phosphate: step 2/6.</text>
</comment>
<comment type="subunit">
    <text evidence="1">Homodimer.</text>
</comment>
<comment type="similarity">
    <text evidence="1">Belongs to the IspD/TarI cytidylyltransferase family. IspD subfamily.</text>
</comment>
<reference key="1">
    <citation type="journal article" date="2005" name="Genome Res.">
        <title>Genome sequence of Blochmannia pennsylvanicus indicates parallel evolutionary trends among bacterial mutualists of insects.</title>
        <authorList>
            <person name="Degnan P.H."/>
            <person name="Lazarus A.B."/>
            <person name="Wernegreen J.J."/>
        </authorList>
    </citation>
    <scope>NUCLEOTIDE SEQUENCE [LARGE SCALE GENOMIC DNA]</scope>
    <source>
        <strain>BPEN</strain>
    </source>
</reference>
<proteinExistence type="inferred from homology"/>
<sequence length="235" mass="26844">MLKKKIPYITAILPAAGTGKRMKSLLPKQYCTIGDKTLIEHSMNALLCQSCIRHCIVVINARDHWFRQLSISYDPRVSVVVGGHTRADSVMAGLQHVKKSVWVIVHDAVRPCLHHEDLLRLFEITKFSQVGGILAIPICNTIKRTYCGTNFIRYTVNRENLWHALTPQLFNYDLLKYCLKKALKNRVTVTDEASALEYCGYKSIVIHGRSDNIKVTHQNDLKLANFYLSKLYKKT</sequence>
<feature type="chain" id="PRO_0000237775" description="2-C-methyl-D-erythritol 4-phosphate cytidylyltransferase">
    <location>
        <begin position="1"/>
        <end position="235"/>
    </location>
</feature>
<feature type="site" description="Transition state stabilizer" evidence="1">
    <location>
        <position position="21"/>
    </location>
</feature>
<feature type="site" description="Transition state stabilizer" evidence="1">
    <location>
        <position position="28"/>
    </location>
</feature>
<feature type="site" description="Positions MEP for the nucleophilic attack" evidence="1">
    <location>
        <position position="158"/>
    </location>
</feature>
<feature type="site" description="Positions MEP for the nucleophilic attack" evidence="1">
    <location>
        <position position="214"/>
    </location>
</feature>
<evidence type="ECO:0000255" key="1">
    <source>
        <dbReference type="HAMAP-Rule" id="MF_00108"/>
    </source>
</evidence>
<accession>Q494E8</accession>
<dbReference type="EC" id="2.7.7.60" evidence="1"/>
<dbReference type="EMBL" id="CP000016">
    <property type="protein sequence ID" value="AAZ40811.1"/>
    <property type="molecule type" value="Genomic_DNA"/>
</dbReference>
<dbReference type="RefSeq" id="WP_011282718.1">
    <property type="nucleotide sequence ID" value="NC_007292.1"/>
</dbReference>
<dbReference type="SMR" id="Q494E8"/>
<dbReference type="STRING" id="291272.BPEN_171"/>
<dbReference type="KEGG" id="bpn:BPEN_171"/>
<dbReference type="eggNOG" id="COG1211">
    <property type="taxonomic scope" value="Bacteria"/>
</dbReference>
<dbReference type="HOGENOM" id="CLU_061281_3_1_6"/>
<dbReference type="OrthoDB" id="9806837at2"/>
<dbReference type="UniPathway" id="UPA00056">
    <property type="reaction ID" value="UER00093"/>
</dbReference>
<dbReference type="Proteomes" id="UP000007794">
    <property type="component" value="Chromosome"/>
</dbReference>
<dbReference type="GO" id="GO:0050518">
    <property type="term" value="F:2-C-methyl-D-erythritol 4-phosphate cytidylyltransferase activity"/>
    <property type="evidence" value="ECO:0007669"/>
    <property type="project" value="UniProtKB-UniRule"/>
</dbReference>
<dbReference type="GO" id="GO:0019288">
    <property type="term" value="P:isopentenyl diphosphate biosynthetic process, methylerythritol 4-phosphate pathway"/>
    <property type="evidence" value="ECO:0007669"/>
    <property type="project" value="UniProtKB-UniRule"/>
</dbReference>
<dbReference type="CDD" id="cd02516">
    <property type="entry name" value="CDP-ME_synthetase"/>
    <property type="match status" value="1"/>
</dbReference>
<dbReference type="FunFam" id="3.90.550.10:FF:000003">
    <property type="entry name" value="2-C-methyl-D-erythritol 4-phosphate cytidylyltransferase"/>
    <property type="match status" value="1"/>
</dbReference>
<dbReference type="Gene3D" id="3.90.550.10">
    <property type="entry name" value="Spore Coat Polysaccharide Biosynthesis Protein SpsA, Chain A"/>
    <property type="match status" value="1"/>
</dbReference>
<dbReference type="HAMAP" id="MF_00108">
    <property type="entry name" value="IspD"/>
    <property type="match status" value="1"/>
</dbReference>
<dbReference type="InterPro" id="IPR001228">
    <property type="entry name" value="IspD"/>
</dbReference>
<dbReference type="InterPro" id="IPR034683">
    <property type="entry name" value="IspD/TarI"/>
</dbReference>
<dbReference type="InterPro" id="IPR050088">
    <property type="entry name" value="IspD/TarI_cytidylyltransf_bact"/>
</dbReference>
<dbReference type="InterPro" id="IPR018294">
    <property type="entry name" value="ISPD_synthase_CS"/>
</dbReference>
<dbReference type="InterPro" id="IPR029044">
    <property type="entry name" value="Nucleotide-diphossugar_trans"/>
</dbReference>
<dbReference type="NCBIfam" id="TIGR00453">
    <property type="entry name" value="ispD"/>
    <property type="match status" value="1"/>
</dbReference>
<dbReference type="PANTHER" id="PTHR32125">
    <property type="entry name" value="2-C-METHYL-D-ERYTHRITOL 4-PHOSPHATE CYTIDYLYLTRANSFERASE, CHLOROPLASTIC"/>
    <property type="match status" value="1"/>
</dbReference>
<dbReference type="PANTHER" id="PTHR32125:SF4">
    <property type="entry name" value="2-C-METHYL-D-ERYTHRITOL 4-PHOSPHATE CYTIDYLYLTRANSFERASE, CHLOROPLASTIC"/>
    <property type="match status" value="1"/>
</dbReference>
<dbReference type="Pfam" id="PF01128">
    <property type="entry name" value="IspD"/>
    <property type="match status" value="1"/>
</dbReference>
<dbReference type="SUPFAM" id="SSF53448">
    <property type="entry name" value="Nucleotide-diphospho-sugar transferases"/>
    <property type="match status" value="1"/>
</dbReference>
<dbReference type="PROSITE" id="PS01295">
    <property type="entry name" value="ISPD"/>
    <property type="match status" value="1"/>
</dbReference>